<name>RL23_HAEIG</name>
<keyword id="KW-0687">Ribonucleoprotein</keyword>
<keyword id="KW-0689">Ribosomal protein</keyword>
<keyword id="KW-0694">RNA-binding</keyword>
<keyword id="KW-0699">rRNA-binding</keyword>
<dbReference type="EMBL" id="CP000672">
    <property type="protein sequence ID" value="ABR00338.1"/>
    <property type="molecule type" value="Genomic_DNA"/>
</dbReference>
<dbReference type="SMR" id="A5UHT2"/>
<dbReference type="KEGG" id="hiq:CGSHiGG_07395"/>
<dbReference type="HOGENOM" id="CLU_037562_3_1_6"/>
<dbReference type="Proteomes" id="UP000001990">
    <property type="component" value="Chromosome"/>
</dbReference>
<dbReference type="GO" id="GO:1990904">
    <property type="term" value="C:ribonucleoprotein complex"/>
    <property type="evidence" value="ECO:0007669"/>
    <property type="project" value="UniProtKB-KW"/>
</dbReference>
<dbReference type="GO" id="GO:0005840">
    <property type="term" value="C:ribosome"/>
    <property type="evidence" value="ECO:0007669"/>
    <property type="project" value="UniProtKB-KW"/>
</dbReference>
<dbReference type="GO" id="GO:0019843">
    <property type="term" value="F:rRNA binding"/>
    <property type="evidence" value="ECO:0007669"/>
    <property type="project" value="UniProtKB-UniRule"/>
</dbReference>
<dbReference type="GO" id="GO:0003735">
    <property type="term" value="F:structural constituent of ribosome"/>
    <property type="evidence" value="ECO:0007669"/>
    <property type="project" value="InterPro"/>
</dbReference>
<dbReference type="GO" id="GO:0006412">
    <property type="term" value="P:translation"/>
    <property type="evidence" value="ECO:0007669"/>
    <property type="project" value="UniProtKB-UniRule"/>
</dbReference>
<dbReference type="FunFam" id="3.30.70.330:FF:000001">
    <property type="entry name" value="50S ribosomal protein L23"/>
    <property type="match status" value="1"/>
</dbReference>
<dbReference type="Gene3D" id="3.30.70.330">
    <property type="match status" value="1"/>
</dbReference>
<dbReference type="HAMAP" id="MF_01369_B">
    <property type="entry name" value="Ribosomal_uL23_B"/>
    <property type="match status" value="1"/>
</dbReference>
<dbReference type="InterPro" id="IPR012677">
    <property type="entry name" value="Nucleotide-bd_a/b_plait_sf"/>
</dbReference>
<dbReference type="InterPro" id="IPR013025">
    <property type="entry name" value="Ribosomal_uL23-like"/>
</dbReference>
<dbReference type="InterPro" id="IPR012678">
    <property type="entry name" value="Ribosomal_uL23/eL15/eS24_sf"/>
</dbReference>
<dbReference type="InterPro" id="IPR001014">
    <property type="entry name" value="Ribosomal_uL23_CS"/>
</dbReference>
<dbReference type="NCBIfam" id="NF004358">
    <property type="entry name" value="PRK05738.1-1"/>
    <property type="match status" value="1"/>
</dbReference>
<dbReference type="NCBIfam" id="NF004359">
    <property type="entry name" value="PRK05738.1-3"/>
    <property type="match status" value="1"/>
</dbReference>
<dbReference type="NCBIfam" id="NF004363">
    <property type="entry name" value="PRK05738.2-4"/>
    <property type="match status" value="1"/>
</dbReference>
<dbReference type="PANTHER" id="PTHR11620">
    <property type="entry name" value="60S RIBOSOMAL PROTEIN L23A"/>
    <property type="match status" value="1"/>
</dbReference>
<dbReference type="Pfam" id="PF00276">
    <property type="entry name" value="Ribosomal_L23"/>
    <property type="match status" value="1"/>
</dbReference>
<dbReference type="SUPFAM" id="SSF54189">
    <property type="entry name" value="Ribosomal proteins S24e, L23 and L15e"/>
    <property type="match status" value="1"/>
</dbReference>
<dbReference type="PROSITE" id="PS00050">
    <property type="entry name" value="RIBOSOMAL_L23"/>
    <property type="match status" value="1"/>
</dbReference>
<evidence type="ECO:0000255" key="1">
    <source>
        <dbReference type="HAMAP-Rule" id="MF_01369"/>
    </source>
</evidence>
<evidence type="ECO:0000305" key="2"/>
<gene>
    <name evidence="1" type="primary">rplW</name>
    <name type="ordered locus">CGSHiGG_07395</name>
</gene>
<reference key="1">
    <citation type="journal article" date="2007" name="Genome Biol.">
        <title>Characterization and modeling of the Haemophilus influenzae core and supragenomes based on the complete genomic sequences of Rd and 12 clinical nontypeable strains.</title>
        <authorList>
            <person name="Hogg J.S."/>
            <person name="Hu F.Z."/>
            <person name="Janto B."/>
            <person name="Boissy R."/>
            <person name="Hayes J."/>
            <person name="Keefe R."/>
            <person name="Post J.C."/>
            <person name="Ehrlich G.D."/>
        </authorList>
    </citation>
    <scope>NUCLEOTIDE SEQUENCE [LARGE SCALE GENOMIC DNA]</scope>
    <source>
        <strain>PittGG</strain>
    </source>
</reference>
<organism>
    <name type="scientific">Haemophilus influenzae (strain PittGG)</name>
    <dbReference type="NCBI Taxonomy" id="374931"/>
    <lineage>
        <taxon>Bacteria</taxon>
        <taxon>Pseudomonadati</taxon>
        <taxon>Pseudomonadota</taxon>
        <taxon>Gammaproteobacteria</taxon>
        <taxon>Pasteurellales</taxon>
        <taxon>Pasteurellaceae</taxon>
        <taxon>Haemophilus</taxon>
    </lineage>
</organism>
<protein>
    <recommendedName>
        <fullName evidence="1">Large ribosomal subunit protein uL23</fullName>
    </recommendedName>
    <alternativeName>
        <fullName evidence="2">50S ribosomal protein L23</fullName>
    </alternativeName>
</protein>
<sequence length="99" mass="10898">MSQERLLSVLRAPHISEKATNNAEKSNTVVLKVALDANKAEIAAAVAQLFEVKVDSVRTVVVKGKTKRRGNKMGRRSDWKKAYVTLAEGQNLDFVDSAE</sequence>
<feature type="chain" id="PRO_1000068084" description="Large ribosomal subunit protein uL23">
    <location>
        <begin position="1"/>
        <end position="99"/>
    </location>
</feature>
<comment type="function">
    <text evidence="1">One of the early assembly proteins it binds 23S rRNA. One of the proteins that surrounds the polypeptide exit tunnel on the outside of the ribosome. Forms the main docking site for trigger factor binding to the ribosome.</text>
</comment>
<comment type="subunit">
    <text evidence="1">Part of the 50S ribosomal subunit. Contacts protein L29, and trigger factor when it is bound to the ribosome.</text>
</comment>
<comment type="similarity">
    <text evidence="1">Belongs to the universal ribosomal protein uL23 family.</text>
</comment>
<accession>A5UHT2</accession>
<proteinExistence type="inferred from homology"/>